<organism>
    <name type="scientific">Mycoplasma pneumoniae (strain ATCC 29342 / M129 / Subtype 1)</name>
    <name type="common">Mycoplasmoides pneumoniae</name>
    <dbReference type="NCBI Taxonomy" id="272634"/>
    <lineage>
        <taxon>Bacteria</taxon>
        <taxon>Bacillati</taxon>
        <taxon>Mycoplasmatota</taxon>
        <taxon>Mycoplasmoidales</taxon>
        <taxon>Mycoplasmoidaceae</taxon>
        <taxon>Mycoplasmoides</taxon>
    </lineage>
</organism>
<keyword id="KW-1185">Reference proteome</keyword>
<sequence>MAWRLWSTTLKVSLTSTLKSLNSASMFANLRSTMTLHSSNSFRVTYYVFGFFTFRWQRSLIITSKVPSGNGIQFDFNSRTSHWLLNFLYSLSEYHLLFKVKTPFLT</sequence>
<name>Y676_MYCPN</name>
<reference key="1">
    <citation type="journal article" date="1996" name="Nucleic Acids Res.">
        <title>Complete sequence analysis of the genome of the bacterium Mycoplasma pneumoniae.</title>
        <authorList>
            <person name="Himmelreich R."/>
            <person name="Hilbert H."/>
            <person name="Plagens H."/>
            <person name="Pirkl E."/>
            <person name="Li B.-C."/>
            <person name="Herrmann R."/>
        </authorList>
    </citation>
    <scope>NUCLEOTIDE SEQUENCE [LARGE SCALE GENOMIC DNA]</scope>
    <source>
        <strain>ATCC 29342 / M129 / Subtype 1</strain>
    </source>
</reference>
<proteinExistence type="predicted"/>
<gene>
    <name type="ordered locus">MPN_676</name>
    <name type="ORF">K05_orf106</name>
    <name type="ORF">MP166</name>
</gene>
<accession>P75116</accession>
<dbReference type="EMBL" id="U00089">
    <property type="protein sequence ID" value="AAB95814.1"/>
    <property type="molecule type" value="Genomic_DNA"/>
</dbReference>
<dbReference type="PIR" id="S73492">
    <property type="entry name" value="S73492"/>
</dbReference>
<dbReference type="IntAct" id="P75116">
    <property type="interactions" value="1"/>
</dbReference>
<dbReference type="STRING" id="272634.MPN_676"/>
<dbReference type="EnsemblBacteria" id="AAB95814">
    <property type="protein sequence ID" value="AAB95814"/>
    <property type="gene ID" value="MPN_676"/>
</dbReference>
<dbReference type="KEGG" id="mpn:MPN_676"/>
<dbReference type="HOGENOM" id="CLU_2220254_0_0_14"/>
<dbReference type="Proteomes" id="UP000000808">
    <property type="component" value="Chromosome"/>
</dbReference>
<protein>
    <recommendedName>
        <fullName>Uncharacterized protein MPN_676</fullName>
    </recommendedName>
</protein>
<feature type="chain" id="PRO_0000210704" description="Uncharacterized protein MPN_676">
    <location>
        <begin position="1"/>
        <end position="106"/>
    </location>
</feature>